<sequence length="83" mass="9390">MRLFLSLPVLVVVLSMVLEGPAPAQGAPDVSSALDKLKEFGNTLEDKAWEVINRIKQSEFPAKTRDWFSETFRKVKEKLKINS</sequence>
<feature type="signal peptide" evidence="5">
    <location>
        <begin position="1"/>
        <end position="26"/>
    </location>
</feature>
<feature type="chain" id="PRO_0000448798" description="Apolipoprotein C-I, basic form">
    <location>
        <begin position="27"/>
        <end position="83"/>
    </location>
</feature>
<feature type="chain" id="PRO_0000448761" description="Cholesteryl ester transfer inhibitor protein" evidence="3">
    <location>
        <begin position="27"/>
        <end position="64"/>
    </location>
</feature>
<feature type="chain" id="PRO_0000448762" description="Truncated apolipoprotein C-I, basic form" evidence="4">
    <location>
        <begin position="29"/>
        <end position="83"/>
    </location>
</feature>
<keyword id="KW-0445">Lipid transport</keyword>
<keyword id="KW-1185">Reference proteome</keyword>
<keyword id="KW-0964">Secreted</keyword>
<keyword id="KW-0732">Signal</keyword>
<keyword id="KW-0813">Transport</keyword>
<accession>P0DTR7</accession>
<organism>
    <name type="scientific">Theropithecus gelada</name>
    <name type="common">Gelada baboon</name>
    <dbReference type="NCBI Taxonomy" id="9565"/>
    <lineage>
        <taxon>Eukaryota</taxon>
        <taxon>Metazoa</taxon>
        <taxon>Chordata</taxon>
        <taxon>Craniata</taxon>
        <taxon>Vertebrata</taxon>
        <taxon>Euteleostomi</taxon>
        <taxon>Mammalia</taxon>
        <taxon>Eutheria</taxon>
        <taxon>Euarchontoglires</taxon>
        <taxon>Primates</taxon>
        <taxon>Haplorrhini</taxon>
        <taxon>Catarrhini</taxon>
        <taxon>Cercopithecidae</taxon>
        <taxon>Cercopithecinae</taxon>
        <taxon>Theropithecus</taxon>
    </lineage>
</organism>
<protein>
    <recommendedName>
        <fullName>Apolipoprotein C-I, basic form</fullName>
        <shortName>Apo-CIB</shortName>
        <shortName>ApoC-IB</shortName>
    </recommendedName>
    <alternativeName>
        <fullName>Apolipoprotein C1B</fullName>
    </alternativeName>
    <component>
        <recommendedName>
            <fullName>Cholesteryl ester transfer inhibitor protein</fullName>
            <shortName>CETIP</shortName>
        </recommendedName>
    </component>
    <component>
        <recommendedName>
            <fullName>Truncated apolipoprotein C-I, basic form</fullName>
            <shortName>Apo-CIB'</shortName>
            <shortName>ApoC-IB'</shortName>
        </recommendedName>
    </component>
</protein>
<name>APO1B_THEGE</name>
<reference key="1">
    <citation type="submission" date="2015-03" db="EMBL/GenBank/DDBJ databases">
        <title>Whole genome of Theropithecus gelada.</title>
        <authorList>
            <person name="Chiou K.L."/>
            <person name="Snyder-Mackler N."/>
        </authorList>
    </citation>
    <scope>NUCLEOTIDE SEQUENCE [LARGE SCALE GENOMIC DNA]</scope>
    <source>
        <tissue>Blood</tissue>
    </source>
</reference>
<reference key="2">
    <citation type="journal article" date="2013" name="Front. Biol.">
        <title>Proteogenomic Review of the Changes in Primate apoC-I during Evolution.</title>
        <authorList>
            <person name="Puppione D."/>
            <person name="Whitelegge J.P."/>
        </authorList>
    </citation>
    <scope>REVIEW</scope>
</reference>
<reference key="3">
    <citation type="journal article" date="2014" name="Comp. Biochem. Physiol.">
        <title>Higher primates, but not New World monkeys, have a duplicate set of enhancers flanking their apoC-I genes.</title>
        <authorList>
            <person name="Puppione D.L."/>
        </authorList>
    </citation>
    <scope>GENE DUPLICATION</scope>
</reference>
<reference key="4">
    <citation type="unpublished observations" date="2019-10">
        <authorList>
            <person name="Puppione D.L."/>
        </authorList>
    </citation>
    <scope>IDENTIFICATION</scope>
</reference>
<comment type="function">
    <text evidence="1 2">Inhibitor of lipoprotein binding to the low density lipoprotein (LDL) receptor, LDL receptor-related protein, and very low density lipoprotein (VLDL) receptor. Associates with high density lipoproteins (HDL) and the triacylglycerol-rich lipoproteins in the plasma and makes up about 10% of the protein of the VLDL and 2% of that of HDL. Appears to interfere directly with fatty acid uptake and is also the major plasma inhibitor of cholesteryl ester transfer protein (CETP). Binds free fatty acids and reduces their intracellular esterification. Modulates the interaction of APOE with beta-migrating VLDL and inhibits binding of beta-VLDL to the LDL receptor-related protein.</text>
</comment>
<comment type="subcellular location">
    <subcellularLocation>
        <location evidence="1">Secreted</location>
    </subcellularLocation>
</comment>
<comment type="miscellaneous">
    <text evidence="6">Apolipoprotein C-I is present in acidic (APOC1A) and basic (APOC1B) forms in P.paniscus, P.abelii and P.troglodytes and perhaps also in baboons and macaques. The two genes for ApoC-I arose through a duplication process that occurred after the divergence of New World monkeys from the human lineage. In human, the acidic form has become a pseudogene sometime between the divergence of bonobos and chimpanzees from the human lineage and the appearance of the Denisovans. Pseudogenization resulted when the codon for the penultimate amino acid in the signal sequence was changed to a stop codon.</text>
</comment>
<comment type="similarity">
    <text evidence="7">Belongs to the apolipoprotein C1 family.</text>
</comment>
<evidence type="ECO:0000250" key="1">
    <source>
        <dbReference type="UniProtKB" id="P02654"/>
    </source>
</evidence>
<evidence type="ECO:0000250" key="2">
    <source>
        <dbReference type="UniProtKB" id="P33047"/>
    </source>
</evidence>
<evidence type="ECO:0000250" key="3">
    <source>
        <dbReference type="UniProtKB" id="P34929"/>
    </source>
</evidence>
<evidence type="ECO:0000250" key="4">
    <source>
        <dbReference type="UniProtKB" id="P86336"/>
    </source>
</evidence>
<evidence type="ECO:0000255" key="5"/>
<evidence type="ECO:0000303" key="6">
    <source>
    </source>
</evidence>
<evidence type="ECO:0000305" key="7"/>
<proteinExistence type="inferred from homology"/>
<gene>
    <name type="primary">APOC1B</name>
</gene>
<dbReference type="EMBL" id="CM009950">
    <property type="status" value="NOT_ANNOTATED_CDS"/>
    <property type="molecule type" value="Genomic_DNA"/>
</dbReference>
<dbReference type="SMR" id="P0DTR7"/>
<dbReference type="Proteomes" id="UP000694411">
    <property type="component" value="Chromosome 1"/>
</dbReference>
<dbReference type="GO" id="GO:0034364">
    <property type="term" value="C:high-density lipoprotein particle"/>
    <property type="evidence" value="ECO:0007669"/>
    <property type="project" value="TreeGrafter"/>
</dbReference>
<dbReference type="GO" id="GO:0034361">
    <property type="term" value="C:very-low-density lipoprotein particle"/>
    <property type="evidence" value="ECO:0007669"/>
    <property type="project" value="TreeGrafter"/>
</dbReference>
<dbReference type="GO" id="GO:0005504">
    <property type="term" value="F:fatty acid binding"/>
    <property type="evidence" value="ECO:0007669"/>
    <property type="project" value="TreeGrafter"/>
</dbReference>
<dbReference type="GO" id="GO:0004859">
    <property type="term" value="F:phospholipase inhibitor activity"/>
    <property type="evidence" value="ECO:0007669"/>
    <property type="project" value="TreeGrafter"/>
</dbReference>
<dbReference type="GO" id="GO:0006869">
    <property type="term" value="P:lipid transport"/>
    <property type="evidence" value="ECO:0007669"/>
    <property type="project" value="UniProtKB-KW"/>
</dbReference>
<dbReference type="GO" id="GO:0042157">
    <property type="term" value="P:lipoprotein metabolic process"/>
    <property type="evidence" value="ECO:0007669"/>
    <property type="project" value="InterPro"/>
</dbReference>
<dbReference type="GO" id="GO:0032375">
    <property type="term" value="P:negative regulation of cholesterol transport"/>
    <property type="evidence" value="ECO:0007669"/>
    <property type="project" value="TreeGrafter"/>
</dbReference>
<dbReference type="GO" id="GO:0050995">
    <property type="term" value="P:negative regulation of lipid catabolic process"/>
    <property type="evidence" value="ECO:0007669"/>
    <property type="project" value="TreeGrafter"/>
</dbReference>
<dbReference type="GO" id="GO:0010916">
    <property type="term" value="P:negative regulation of very-low-density lipoprotein particle clearance"/>
    <property type="evidence" value="ECO:0007669"/>
    <property type="project" value="TreeGrafter"/>
</dbReference>
<dbReference type="GO" id="GO:0006641">
    <property type="term" value="P:triglyceride metabolic process"/>
    <property type="evidence" value="ECO:0007669"/>
    <property type="project" value="TreeGrafter"/>
</dbReference>
<dbReference type="GO" id="GO:0034447">
    <property type="term" value="P:very-low-density lipoprotein particle clearance"/>
    <property type="evidence" value="ECO:0007669"/>
    <property type="project" value="TreeGrafter"/>
</dbReference>
<dbReference type="Gene3D" id="4.10.260.30">
    <property type="entry name" value="Apolipoprotein C-I"/>
    <property type="match status" value="1"/>
</dbReference>
<dbReference type="InterPro" id="IPR043081">
    <property type="entry name" value="ApoC-1_sf"/>
</dbReference>
<dbReference type="InterPro" id="IPR006781">
    <property type="entry name" value="ApoC-I"/>
</dbReference>
<dbReference type="PANTHER" id="PTHR16565">
    <property type="entry name" value="APOLIPOPROTEIN C-I"/>
    <property type="match status" value="1"/>
</dbReference>
<dbReference type="PANTHER" id="PTHR16565:SF2">
    <property type="entry name" value="APOLIPOPROTEIN C-I"/>
    <property type="match status" value="1"/>
</dbReference>
<dbReference type="Pfam" id="PF04691">
    <property type="entry name" value="ApoC-I"/>
    <property type="match status" value="1"/>
</dbReference>